<protein>
    <recommendedName>
        <fullName evidence="3">N-acetylneuraminate lyase</fullName>
        <shortName>NALase</shortName>
        <ecNumber evidence="3">4.1.3.3</ecNumber>
    </recommendedName>
    <alternativeName>
        <fullName>N-acetylneuraminate pyruvate-lyase</fullName>
    </alternativeName>
    <alternativeName>
        <fullName>N-acetylneuraminic acid aldolase</fullName>
    </alternativeName>
    <alternativeName>
        <fullName>Sialate lyase</fullName>
    </alternativeName>
    <alternativeName>
        <fullName>Sialate-pyruvate lyase</fullName>
    </alternativeName>
    <alternativeName>
        <fullName>Sialic acid aldolase</fullName>
    </alternativeName>
    <alternativeName>
        <fullName>Sialic acid lyase</fullName>
    </alternativeName>
</protein>
<evidence type="ECO:0000250" key="1"/>
<evidence type="ECO:0000250" key="2">
    <source>
        <dbReference type="UniProtKB" id="P0A6L4"/>
    </source>
</evidence>
<evidence type="ECO:0000250" key="3">
    <source>
        <dbReference type="UniProtKB" id="Q9BXD5"/>
    </source>
</evidence>
<evidence type="ECO:0000305" key="4"/>
<name>NPL_CHICK</name>
<reference key="1">
    <citation type="journal article" date="2005" name="Genome Biol.">
        <title>Full-length cDNAs from chicken bursal lymphocytes to facilitate gene function analysis.</title>
        <authorList>
            <person name="Caldwell R.B."/>
            <person name="Kierzek A.M."/>
            <person name="Arakawa H."/>
            <person name="Bezzubov Y."/>
            <person name="Zaim J."/>
            <person name="Fiedler P."/>
            <person name="Kutter S."/>
            <person name="Blagodatski A."/>
            <person name="Kostovska D."/>
            <person name="Koter M."/>
            <person name="Plachy J."/>
            <person name="Carninci P."/>
            <person name="Hayashizaki Y."/>
            <person name="Buerstedde J.-M."/>
        </authorList>
    </citation>
    <scope>NUCLEOTIDE SEQUENCE [LARGE SCALE MRNA]</scope>
    <source>
        <strain>CB</strain>
        <tissue>Bursa of Fabricius</tissue>
    </source>
</reference>
<dbReference type="EC" id="4.1.3.3" evidence="3"/>
<dbReference type="EMBL" id="AJ720150">
    <property type="protein sequence ID" value="CAG31809.1"/>
    <property type="molecule type" value="mRNA"/>
</dbReference>
<dbReference type="RefSeq" id="NP_001026731.1">
    <property type="nucleotide sequence ID" value="NM_001031560.2"/>
</dbReference>
<dbReference type="SMR" id="Q5ZKD4"/>
<dbReference type="FunCoup" id="Q5ZKD4">
    <property type="interactions" value="19"/>
</dbReference>
<dbReference type="STRING" id="9031.ENSGALP00000007334"/>
<dbReference type="PaxDb" id="9031-ENSGALP00000007334"/>
<dbReference type="GeneID" id="429074"/>
<dbReference type="KEGG" id="gga:429074"/>
<dbReference type="CTD" id="80896"/>
<dbReference type="VEuPathDB" id="HostDB:geneid_429074"/>
<dbReference type="eggNOG" id="ENOG502QQA3">
    <property type="taxonomic scope" value="Eukaryota"/>
</dbReference>
<dbReference type="InParanoid" id="Q5ZKD4"/>
<dbReference type="OrthoDB" id="191315at2759"/>
<dbReference type="PhylomeDB" id="Q5ZKD4"/>
<dbReference type="UniPathway" id="UPA00629"/>
<dbReference type="PRO" id="PR:Q5ZKD4"/>
<dbReference type="Proteomes" id="UP000000539">
    <property type="component" value="Unassembled WGS sequence"/>
</dbReference>
<dbReference type="GO" id="GO:0005737">
    <property type="term" value="C:cytoplasm"/>
    <property type="evidence" value="ECO:0007669"/>
    <property type="project" value="UniProtKB-SubCell"/>
</dbReference>
<dbReference type="GO" id="GO:0008747">
    <property type="term" value="F:N-acetylneuraminate lyase activity"/>
    <property type="evidence" value="ECO:0000250"/>
    <property type="project" value="UniProtKB"/>
</dbReference>
<dbReference type="GO" id="GO:0019262">
    <property type="term" value="P:N-acetylneuraminate catabolic process"/>
    <property type="evidence" value="ECO:0000250"/>
    <property type="project" value="UniProtKB"/>
</dbReference>
<dbReference type="FunFam" id="3.20.20.70:FF:000133">
    <property type="entry name" value="N-acetylneuraminate pyruvate lyase"/>
    <property type="match status" value="1"/>
</dbReference>
<dbReference type="Gene3D" id="3.20.20.70">
    <property type="entry name" value="Aldolase class I"/>
    <property type="match status" value="1"/>
</dbReference>
<dbReference type="InterPro" id="IPR013785">
    <property type="entry name" value="Aldolase_TIM"/>
</dbReference>
<dbReference type="InterPro" id="IPR002220">
    <property type="entry name" value="DapA-like"/>
</dbReference>
<dbReference type="PANTHER" id="PTHR12128">
    <property type="entry name" value="DIHYDRODIPICOLINATE SYNTHASE"/>
    <property type="match status" value="1"/>
</dbReference>
<dbReference type="PANTHER" id="PTHR12128:SF21">
    <property type="entry name" value="N-ACETYLNEURAMINATE LYASE"/>
    <property type="match status" value="1"/>
</dbReference>
<dbReference type="Pfam" id="PF00701">
    <property type="entry name" value="DHDPS"/>
    <property type="match status" value="1"/>
</dbReference>
<dbReference type="PIRSF" id="PIRSF001365">
    <property type="entry name" value="DHDPS"/>
    <property type="match status" value="1"/>
</dbReference>
<dbReference type="PRINTS" id="PR00146">
    <property type="entry name" value="DHPICSNTHASE"/>
</dbReference>
<dbReference type="SMART" id="SM01130">
    <property type="entry name" value="DHDPS"/>
    <property type="match status" value="1"/>
</dbReference>
<dbReference type="SUPFAM" id="SSF51569">
    <property type="entry name" value="Aldolase"/>
    <property type="match status" value="1"/>
</dbReference>
<proteinExistence type="evidence at transcript level"/>
<keyword id="KW-0119">Carbohydrate metabolism</keyword>
<keyword id="KW-0963">Cytoplasm</keyword>
<keyword id="KW-0456">Lyase</keyword>
<keyword id="KW-1185">Reference proteome</keyword>
<keyword id="KW-0704">Schiff base</keyword>
<gene>
    <name evidence="3" type="primary">NPL</name>
    <name type="ORF">RCJMB04_11j23</name>
</gene>
<accession>Q5ZKD4</accession>
<organism>
    <name type="scientific">Gallus gallus</name>
    <name type="common">Chicken</name>
    <dbReference type="NCBI Taxonomy" id="9031"/>
    <lineage>
        <taxon>Eukaryota</taxon>
        <taxon>Metazoa</taxon>
        <taxon>Chordata</taxon>
        <taxon>Craniata</taxon>
        <taxon>Vertebrata</taxon>
        <taxon>Euteleostomi</taxon>
        <taxon>Archelosauria</taxon>
        <taxon>Archosauria</taxon>
        <taxon>Dinosauria</taxon>
        <taxon>Saurischia</taxon>
        <taxon>Theropoda</taxon>
        <taxon>Coelurosauria</taxon>
        <taxon>Aves</taxon>
        <taxon>Neognathae</taxon>
        <taxon>Galloanserae</taxon>
        <taxon>Galliformes</taxon>
        <taxon>Phasianidae</taxon>
        <taxon>Phasianinae</taxon>
        <taxon>Gallus</taxon>
    </lineage>
</organism>
<comment type="function">
    <text evidence="3">Catalyzes the cleavage of N-acetylneuraminic acid (sialic acid) to form pyruvate and N-acetylmannosamine via a Schiff base intermediate. It prevents sialic acids from being recycled and returning to the cell surface. Involved in the N-glycolylneuraminic acid (Neu5Gc) degradation pathway.</text>
</comment>
<comment type="catalytic activity">
    <reaction evidence="3">
        <text>aceneuramate = aldehydo-N-acetyl-D-mannosamine + pyruvate</text>
        <dbReference type="Rhea" id="RHEA:23296"/>
        <dbReference type="ChEBI" id="CHEBI:15361"/>
        <dbReference type="ChEBI" id="CHEBI:17122"/>
        <dbReference type="ChEBI" id="CHEBI:173083"/>
        <dbReference type="EC" id="4.1.3.3"/>
    </reaction>
</comment>
<comment type="pathway">
    <text evidence="3">Amino-sugar metabolism; N-acetylneuraminate degradation.</text>
</comment>
<comment type="subunit">
    <text evidence="3">Homotetramer.</text>
</comment>
<comment type="subcellular location">
    <subcellularLocation>
        <location evidence="1">Cytoplasm</location>
    </subcellularLocation>
</comment>
<comment type="similarity">
    <text evidence="4">Belongs to the DapA family. NanA subfamily.</text>
</comment>
<sequence>MTPRKKLEGLVAATVTPMTPDGRINLSVIHQYVDYLVSEQNVKNIFVNGTTGEGLSLSIQERKQLAEEWMCQGKGKLDHVIIHVGALSLLESQELARHAAAIGASGIAVIAPSFFKPTNKDELLGFLQKVASEAPTVPFYYYHIPAMTGVKIRVEELLDGIREQIPTFQGVKFSDTDLLDLAQCINKKEREQFVFLYGVDEQLLSALAIGANGAVGSTYNYLGRKTNLMLQAFAKPDLALARKYQFLTGEFLSFVIKLGFGVAQTKAVMTSISGIPMGPPRLPLVGASEEFIAKAKAKLESIVWPDGD</sequence>
<feature type="chain" id="PRO_0000273357" description="N-acetylneuraminate lyase">
    <location>
        <begin position="1"/>
        <end position="308"/>
    </location>
</feature>
<feature type="active site" description="Proton donor" evidence="2">
    <location>
        <position position="142"/>
    </location>
</feature>
<feature type="active site" description="Schiff-base intermediate with substrate" evidence="2">
    <location>
        <position position="172"/>
    </location>
</feature>
<feature type="binding site" evidence="2">
    <location>
        <position position="50"/>
    </location>
    <ligand>
        <name>aceneuramate</name>
        <dbReference type="ChEBI" id="CHEBI:173083"/>
    </ligand>
</feature>
<feature type="binding site" evidence="2">
    <location>
        <position position="51"/>
    </location>
    <ligand>
        <name>aceneuramate</name>
        <dbReference type="ChEBI" id="CHEBI:173083"/>
    </ligand>
</feature>
<feature type="binding site" evidence="2">
    <location>
        <position position="174"/>
    </location>
    <ligand>
        <name>aceneuramate</name>
        <dbReference type="ChEBI" id="CHEBI:173083"/>
    </ligand>
</feature>
<feature type="binding site" evidence="2">
    <location>
        <position position="198"/>
    </location>
    <ligand>
        <name>aceneuramate</name>
        <dbReference type="ChEBI" id="CHEBI:173083"/>
    </ligand>
</feature>
<feature type="binding site" evidence="2">
    <location>
        <position position="200"/>
    </location>
    <ligand>
        <name>aceneuramate</name>
        <dbReference type="ChEBI" id="CHEBI:173083"/>
    </ligand>
</feature>
<feature type="binding site" evidence="2">
    <location>
        <position position="201"/>
    </location>
    <ligand>
        <name>aceneuramate</name>
        <dbReference type="ChEBI" id="CHEBI:173083"/>
    </ligand>
</feature>
<feature type="binding site" evidence="2">
    <location>
        <position position="217"/>
    </location>
    <ligand>
        <name>aceneuramate</name>
        <dbReference type="ChEBI" id="CHEBI:173083"/>
    </ligand>
</feature>